<feature type="signal peptide" evidence="1">
    <location>
        <begin position="1"/>
        <end position="20"/>
    </location>
</feature>
<feature type="propeptide" id="PRO_0000452285" evidence="6">
    <location>
        <begin position="21"/>
        <end position="37"/>
    </location>
</feature>
<feature type="chain" id="PRO_0000452286" description="Excelsatoxin A" evidence="6">
    <location>
        <begin position="38"/>
        <end position="73"/>
    </location>
</feature>
<feature type="disulfide bond" evidence="2 7">
    <location>
        <begin position="41"/>
        <end position="58"/>
    </location>
</feature>
<feature type="disulfide bond" evidence="2 7">
    <location>
        <begin position="46"/>
        <end position="60"/>
    </location>
</feature>
<feature type="disulfide bond" evidence="2 7">
    <location>
        <begin position="54"/>
        <end position="69"/>
    </location>
</feature>
<protein>
    <recommendedName>
        <fullName evidence="4">Excelsatoxin A</fullName>
        <shortName evidence="4">ExTxA</shortName>
    </recommendedName>
</protein>
<evidence type="ECO:0000255" key="1"/>
<evidence type="ECO:0000269" key="2">
    <source>
    </source>
</evidence>
<evidence type="ECO:0000269" key="3">
    <source>
    </source>
</evidence>
<evidence type="ECO:0000303" key="4">
    <source>
    </source>
</evidence>
<evidence type="ECO:0000305" key="5"/>
<evidence type="ECO:0000305" key="6">
    <source>
    </source>
</evidence>
<evidence type="ECO:0007744" key="7">
    <source>
        <dbReference type="PDB" id="6VH8"/>
    </source>
</evidence>
<organism>
    <name type="scientific">Dendrocnide excelsa</name>
    <name type="common">Giant stinging tree</name>
    <name type="synonym">Urera excelsa</name>
    <dbReference type="NCBI Taxonomy" id="647263"/>
    <lineage>
        <taxon>Eukaryota</taxon>
        <taxon>Viridiplantae</taxon>
        <taxon>Streptophyta</taxon>
        <taxon>Embryophyta</taxon>
        <taxon>Tracheophyta</taxon>
        <taxon>Spermatophyta</taxon>
        <taxon>Magnoliopsida</taxon>
        <taxon>eudicotyledons</taxon>
        <taxon>Gunneridae</taxon>
        <taxon>Pentapetalae</taxon>
        <taxon>rosids</taxon>
        <taxon>fabids</taxon>
        <taxon>Rosales</taxon>
        <taxon>Urticaceae</taxon>
        <taxon>Dendrocnide</taxon>
    </lineage>
</organism>
<keyword id="KW-0002">3D-structure</keyword>
<keyword id="KW-0903">Direct protein sequencing</keyword>
<keyword id="KW-1015">Disulfide bond</keyword>
<keyword id="KW-0872">Ion channel impairing toxin</keyword>
<keyword id="KW-0960">Knottin</keyword>
<keyword id="KW-0528">Neurotoxin</keyword>
<keyword id="KW-0611">Plant defense</keyword>
<keyword id="KW-0964">Secreted</keyword>
<keyword id="KW-0732">Signal</keyword>
<keyword id="KW-0800">Toxin</keyword>
<keyword id="KW-0738">Voltage-gated sodium channel impairing toxin</keyword>
<dbReference type="EMBL" id="MN784116">
    <property type="protein sequence ID" value="QNO39340.1"/>
    <property type="molecule type" value="mRNA"/>
</dbReference>
<dbReference type="PDB" id="6VH8">
    <property type="method" value="NMR"/>
    <property type="chains" value="A=38-73"/>
</dbReference>
<dbReference type="PDBsum" id="6VH8"/>
<dbReference type="SMR" id="P0DQP3"/>
<dbReference type="GO" id="GO:0005576">
    <property type="term" value="C:extracellular region"/>
    <property type="evidence" value="ECO:0007669"/>
    <property type="project" value="UniProtKB-SubCell"/>
</dbReference>
<dbReference type="GO" id="GO:0017080">
    <property type="term" value="F:sodium channel regulator activity"/>
    <property type="evidence" value="ECO:0000314"/>
    <property type="project" value="UniProtKB"/>
</dbReference>
<dbReference type="GO" id="GO:0090729">
    <property type="term" value="F:toxin activity"/>
    <property type="evidence" value="ECO:0000314"/>
    <property type="project" value="UniProtKB"/>
</dbReference>
<dbReference type="GO" id="GO:0006952">
    <property type="term" value="P:defense response"/>
    <property type="evidence" value="ECO:0007669"/>
    <property type="project" value="UniProtKB-KW"/>
</dbReference>
<accession>P0DQP3</accession>
<accession>A0A7G9XV73</accession>
<name>NTXA_DENEC</name>
<reference key="1">
    <citation type="journal article" date="2020" name="Sci. Adv.">
        <title>Neurotoxic peptides from the venom of the giant Australian stinging tree.</title>
        <authorList>
            <person name="Gilding E.K."/>
            <person name="Jami S."/>
            <person name="Deuis J.R."/>
            <person name="Israel M.R."/>
            <person name="Harvey P.J."/>
            <person name="Poth A.G."/>
            <person name="Rehm F.B.H."/>
            <person name="Stow J.L."/>
            <person name="Robinson S.D."/>
            <person name="Yap K."/>
            <person name="Brown D.L."/>
            <person name="Hamilton B.R."/>
            <person name="Andersson D."/>
            <person name="Craik D.J."/>
            <person name="Vetter I."/>
            <person name="Durek T."/>
        </authorList>
    </citation>
    <scope>NUCLEOTIDE SEQUENCE [MRNA]</scope>
    <scope>PROTEIN SEQUENCE OF 58-73</scope>
    <scope>FUNCTION</scope>
    <scope>TISSUE SPECIFICITY</scope>
    <scope>SYNTHESIS OF 38-73</scope>
    <scope>STRUCTURE BY NMR OF 38-73</scope>
    <scope>IDENTIFICATION BY MASS SPECTROMETRY</scope>
</reference>
<reference key="2">
    <citation type="journal article" date="2023" name="Nat. Commun.">
        <title>Pain-causing stinging nettle toxins target TMEM233 to modulate NaV1.7 function.</title>
        <authorList>
            <person name="Jami S."/>
            <person name="Deuis J.R."/>
            <person name="Klasfauseweh T."/>
            <person name="Cheng X."/>
            <person name="Kurdyukov S."/>
            <person name="Chung F."/>
            <person name="Okorokov A.L."/>
            <person name="Li S."/>
            <person name="Zhang J."/>
            <person name="Cristofori-Armstrong B."/>
            <person name="Israel M.R."/>
            <person name="Ju R.J."/>
            <person name="Robinson S.D."/>
            <person name="Zhao P."/>
            <person name="Ragnarsson L."/>
            <person name="Andersson A."/>
            <person name="Tran P."/>
            <person name="Schendel V."/>
            <person name="McMahon K.L."/>
            <person name="Tran H.N.T."/>
            <person name="Chin Y.K."/>
            <person name="Zhu Y."/>
            <person name="Liu J."/>
            <person name="Crawford T."/>
            <person name="Purushothamvasan S."/>
            <person name="Habib A.M."/>
            <person name="Andersson D.A."/>
            <person name="Rash L.D."/>
            <person name="Wood J.N."/>
            <person name="Zhao J."/>
            <person name="Stehbens S.J."/>
            <person name="Mobli M."/>
            <person name="Leffler A."/>
            <person name="Jiang D."/>
            <person name="Cox J.J."/>
            <person name="Waxman S.G."/>
            <person name="Dib-Hajj S.D."/>
            <person name="Gregory Neely G."/>
            <person name="Durek T."/>
            <person name="Vetter I."/>
        </authorList>
    </citation>
    <scope>FUNCTION</scope>
</reference>
<comment type="function">
    <text evidence="2 3">Neurotoxin certainly responsible for the defensive, persistent, and painful stings of the giant stinging tree (PubMed:32938666). Inhibits inactivation of Nav1.7/SCN9A sodium channel in sensory neurons by directly interacting with TMEM233, a newly described Nav-interacting protein (PubMed:32938666, PubMed:37117223). Has virtually no effect on Nav1.7/SCN9A function in heterologous expression systems and in neurons that do not express TMEM233 (PubMed:37117223). Also weakly but significantly affects Nav1.8/SCN10A (PubMed:37117223). Coexpression of TMEM233 with Nav also confers ExTxA sensitivity to Nav1.1-Nav1.6 (PubMed:37117223). On the Nav1.7/SCN9A channel, causes a significant hyperpolarizing shift in the voltage dependence of activation (PubMed:32938666, PubMed:37117223). Its effects on Nav currents are irreversible, with no apparent reduction in activity even after repeated wash steps over 30 minutes (PubMed:32938666). Does not show activity on Nav1.9/SCN11A (PubMed:37117223). Does not show insecticidal activities (PubMed:37117223). In vivo, induces nocifensive behavior in mice (licking or biting and shaking or lifting of the affected paw) lasting for approximately 1 hour (PubMed:32938666).</text>
</comment>
<comment type="subcellular location">
    <subcellularLocation>
        <location evidence="6">Secreted</location>
    </subcellularLocation>
</comment>
<comment type="tissue specificity">
    <text evidence="2">Expressed in trichomes, that are stiff epidermal hairs located on the surface of petioles and leaves (PubMed:32938666). Not expressed in other aerial parts (PubMed:32938666).</text>
</comment>
<comment type="domain">
    <text evidence="6">The presence of a 'disulfide through disulfide knot' structurally defines this protein as a knottin.</text>
</comment>
<comment type="miscellaneous">
    <text evidence="6">The name 'gympietide' is derived from the name in the Gubbi-Gubbi language for the stinging trees (gympie-gympie).</text>
</comment>
<comment type="similarity">
    <text evidence="5">Belongs to the gympietide family.</text>
</comment>
<sequence>MRFALVAAITIALLVAGSVADESSEDIDNIVIKTPLDLPRCDSPFCSLFRIGLCGDKCTCVPLPIFGLCVPDV</sequence>
<proteinExistence type="evidence at protein level"/>